<accession>P60532</accession>
<accession>O86017</accession>
<keyword id="KW-0143">Chaperone</keyword>
<keyword id="KW-0963">Cytoplasm</keyword>
<keyword id="KW-0346">Stress response</keyword>
<comment type="function">
    <text evidence="2">Together with the chaperonin GroEL, plays an essential role in assisting protein folding. The GroEL-GroES system forms a nano-cage that allows encapsulation of the non-native substrate proteins and provides a physical environment optimized to promote and accelerate protein folding. GroES binds to the apical surface of the GroEL ring, thereby capping the opening of the GroEL channel.</text>
</comment>
<comment type="subunit">
    <text evidence="2">Heptamer of 7 subunits arranged in a ring. Interacts with the chaperonin GroEL.</text>
</comment>
<comment type="subcellular location">
    <subcellularLocation>
        <location evidence="2">Cytoplasm</location>
    </subcellularLocation>
</comment>
<comment type="similarity">
    <text evidence="2 3">Belongs to the GroES chaperonin family.</text>
</comment>
<sequence length="100" mass="10748">MAKVNIKPLEDKILVQANEAETTTASGLVIPDTAKEKPQEGTVVAVGPGRWDDDGAKRIPLDVSEGDTVIYSKYGGTEIKYNGEEYLILSARDVLAVVSK</sequence>
<reference key="1">
    <citation type="submission" date="1998-07" db="EMBL/GenBank/DDBJ databases">
        <title>Sequence of the GroESL operon of Mycobacterium avium comprising the gene encoding the cpn10 protein and a portion of the gene encoding the cpn60-1 protein.</title>
        <authorList>
            <person name="Creti R."/>
            <person name="Pietrobono R."/>
            <person name="Fattorini L."/>
            <person name="Orefici G."/>
        </authorList>
    </citation>
    <scope>NUCLEOTIDE SEQUENCE [GENOMIC DNA]</scope>
    <source>
        <strain>485 Type 21</strain>
    </source>
</reference>
<reference key="2">
    <citation type="journal article" date="1999" name="Vet. Microbiol.">
        <title>The GroES antigens of Mycobacterium avium and Mycobacterium paratuberculosis.</title>
        <authorList>
            <person name="Cobb A.J."/>
            <person name="Frothingham R."/>
        </authorList>
    </citation>
    <scope>NUCLEOTIDE SEQUENCE [GENOMIC DNA]</scope>
    <source>
        <strain>ATCC 25291 / DSM 44156 / NCTC 13034 / TMC 724</strain>
    </source>
</reference>
<feature type="initiator methionine" description="Removed" evidence="1">
    <location>
        <position position="1"/>
    </location>
</feature>
<feature type="chain" id="PRO_0000174784" description="Co-chaperonin GroES">
    <location>
        <begin position="2"/>
        <end position="100"/>
    </location>
</feature>
<organism>
    <name type="scientific">Mycobacterium avium</name>
    <dbReference type="NCBI Taxonomy" id="1764"/>
    <lineage>
        <taxon>Bacteria</taxon>
        <taxon>Bacillati</taxon>
        <taxon>Actinomycetota</taxon>
        <taxon>Actinomycetes</taxon>
        <taxon>Mycobacteriales</taxon>
        <taxon>Mycobacteriaceae</taxon>
        <taxon>Mycobacterium</taxon>
        <taxon>Mycobacterium avium complex (MAC)</taxon>
    </lineage>
</organism>
<protein>
    <recommendedName>
        <fullName evidence="2">Co-chaperonin GroES</fullName>
    </recommendedName>
    <alternativeName>
        <fullName>10 kDa antigen</fullName>
    </alternativeName>
    <alternativeName>
        <fullName evidence="2">10 kDa chaperonin</fullName>
    </alternativeName>
    <alternativeName>
        <fullName evidence="2">Chaperonin-10</fullName>
        <shortName evidence="2">Cpn10</shortName>
    </alternativeName>
</protein>
<evidence type="ECO:0000250" key="1"/>
<evidence type="ECO:0000255" key="2">
    <source>
        <dbReference type="HAMAP-Rule" id="MF_00580"/>
    </source>
</evidence>
<evidence type="ECO:0000305" key="3"/>
<name>CH10_MYCAV</name>
<dbReference type="EMBL" id="AF079544">
    <property type="protein sequence ID" value="AAC31921.1"/>
    <property type="molecule type" value="Genomic_DNA"/>
</dbReference>
<dbReference type="EMBL" id="AF071828">
    <property type="protein sequence ID" value="AAD23276.1"/>
    <property type="molecule type" value="Genomic_DNA"/>
</dbReference>
<dbReference type="RefSeq" id="WP_003873391.1">
    <property type="nucleotide sequence ID" value="NZ_NSFM01000032.1"/>
</dbReference>
<dbReference type="SMR" id="P60532"/>
<dbReference type="GeneID" id="75271880"/>
<dbReference type="OMA" id="EDFLIMR"/>
<dbReference type="GO" id="GO:0005737">
    <property type="term" value="C:cytoplasm"/>
    <property type="evidence" value="ECO:0007669"/>
    <property type="project" value="UniProtKB-SubCell"/>
</dbReference>
<dbReference type="GO" id="GO:0005524">
    <property type="term" value="F:ATP binding"/>
    <property type="evidence" value="ECO:0007669"/>
    <property type="project" value="InterPro"/>
</dbReference>
<dbReference type="GO" id="GO:0046872">
    <property type="term" value="F:metal ion binding"/>
    <property type="evidence" value="ECO:0007669"/>
    <property type="project" value="TreeGrafter"/>
</dbReference>
<dbReference type="GO" id="GO:0044183">
    <property type="term" value="F:protein folding chaperone"/>
    <property type="evidence" value="ECO:0007669"/>
    <property type="project" value="InterPro"/>
</dbReference>
<dbReference type="GO" id="GO:0051087">
    <property type="term" value="F:protein-folding chaperone binding"/>
    <property type="evidence" value="ECO:0007669"/>
    <property type="project" value="TreeGrafter"/>
</dbReference>
<dbReference type="GO" id="GO:0051082">
    <property type="term" value="F:unfolded protein binding"/>
    <property type="evidence" value="ECO:0007669"/>
    <property type="project" value="TreeGrafter"/>
</dbReference>
<dbReference type="GO" id="GO:0051085">
    <property type="term" value="P:chaperone cofactor-dependent protein refolding"/>
    <property type="evidence" value="ECO:0007669"/>
    <property type="project" value="TreeGrafter"/>
</dbReference>
<dbReference type="CDD" id="cd00320">
    <property type="entry name" value="cpn10"/>
    <property type="match status" value="1"/>
</dbReference>
<dbReference type="FunFam" id="2.30.33.40:FF:000001">
    <property type="entry name" value="10 kDa chaperonin"/>
    <property type="match status" value="1"/>
</dbReference>
<dbReference type="Gene3D" id="2.30.33.40">
    <property type="entry name" value="GroES chaperonin"/>
    <property type="match status" value="1"/>
</dbReference>
<dbReference type="HAMAP" id="MF_00580">
    <property type="entry name" value="CH10"/>
    <property type="match status" value="1"/>
</dbReference>
<dbReference type="InterPro" id="IPR020818">
    <property type="entry name" value="Chaperonin_GroES"/>
</dbReference>
<dbReference type="InterPro" id="IPR037124">
    <property type="entry name" value="Chaperonin_GroES_sf"/>
</dbReference>
<dbReference type="InterPro" id="IPR018369">
    <property type="entry name" value="Chaprnonin_Cpn10_CS"/>
</dbReference>
<dbReference type="InterPro" id="IPR011032">
    <property type="entry name" value="GroES-like_sf"/>
</dbReference>
<dbReference type="NCBIfam" id="NF001530">
    <property type="entry name" value="PRK00364.1-6"/>
    <property type="match status" value="1"/>
</dbReference>
<dbReference type="NCBIfam" id="NF001531">
    <property type="entry name" value="PRK00364.2-2"/>
    <property type="match status" value="1"/>
</dbReference>
<dbReference type="NCBIfam" id="NF001533">
    <property type="entry name" value="PRK00364.2-4"/>
    <property type="match status" value="1"/>
</dbReference>
<dbReference type="NCBIfam" id="NF001534">
    <property type="entry name" value="PRK00364.2-5"/>
    <property type="match status" value="1"/>
</dbReference>
<dbReference type="PANTHER" id="PTHR10772">
    <property type="entry name" value="10 KDA HEAT SHOCK PROTEIN"/>
    <property type="match status" value="1"/>
</dbReference>
<dbReference type="PANTHER" id="PTHR10772:SF58">
    <property type="entry name" value="CO-CHAPERONIN GROES"/>
    <property type="match status" value="1"/>
</dbReference>
<dbReference type="Pfam" id="PF00166">
    <property type="entry name" value="Cpn10"/>
    <property type="match status" value="1"/>
</dbReference>
<dbReference type="PRINTS" id="PR00297">
    <property type="entry name" value="CHAPERONIN10"/>
</dbReference>
<dbReference type="SMART" id="SM00883">
    <property type="entry name" value="Cpn10"/>
    <property type="match status" value="1"/>
</dbReference>
<dbReference type="SUPFAM" id="SSF50129">
    <property type="entry name" value="GroES-like"/>
    <property type="match status" value="1"/>
</dbReference>
<dbReference type="PROSITE" id="PS00681">
    <property type="entry name" value="CHAPERONINS_CPN10"/>
    <property type="match status" value="1"/>
</dbReference>
<proteinExistence type="inferred from homology"/>
<gene>
    <name evidence="2" type="primary">groES</name>
    <name evidence="2" type="synonym">groS</name>
    <name type="synonym">mopB</name>
</gene>